<name>DAPA_PROM5</name>
<accession>A2BZ39</accession>
<reference key="1">
    <citation type="journal article" date="2007" name="PLoS Genet.">
        <title>Patterns and implications of gene gain and loss in the evolution of Prochlorococcus.</title>
        <authorList>
            <person name="Kettler G.C."/>
            <person name="Martiny A.C."/>
            <person name="Huang K."/>
            <person name="Zucker J."/>
            <person name="Coleman M.L."/>
            <person name="Rodrigue S."/>
            <person name="Chen F."/>
            <person name="Lapidus A."/>
            <person name="Ferriera S."/>
            <person name="Johnson J."/>
            <person name="Steglich C."/>
            <person name="Church G.M."/>
            <person name="Richardson P."/>
            <person name="Chisholm S.W."/>
        </authorList>
    </citation>
    <scope>NUCLEOTIDE SEQUENCE [LARGE SCALE GENOMIC DNA]</scope>
    <source>
        <strain>MIT 9515</strain>
    </source>
</reference>
<keyword id="KW-0028">Amino-acid biosynthesis</keyword>
<keyword id="KW-0963">Cytoplasm</keyword>
<keyword id="KW-0220">Diaminopimelate biosynthesis</keyword>
<keyword id="KW-0456">Lyase</keyword>
<keyword id="KW-0457">Lysine biosynthesis</keyword>
<keyword id="KW-0704">Schiff base</keyword>
<comment type="function">
    <text evidence="1">Catalyzes the condensation of (S)-aspartate-beta-semialdehyde [(S)-ASA] and pyruvate to 4-hydroxy-tetrahydrodipicolinate (HTPA).</text>
</comment>
<comment type="catalytic activity">
    <reaction evidence="1">
        <text>L-aspartate 4-semialdehyde + pyruvate = (2S,4S)-4-hydroxy-2,3,4,5-tetrahydrodipicolinate + H2O + H(+)</text>
        <dbReference type="Rhea" id="RHEA:34171"/>
        <dbReference type="ChEBI" id="CHEBI:15361"/>
        <dbReference type="ChEBI" id="CHEBI:15377"/>
        <dbReference type="ChEBI" id="CHEBI:15378"/>
        <dbReference type="ChEBI" id="CHEBI:67139"/>
        <dbReference type="ChEBI" id="CHEBI:537519"/>
        <dbReference type="EC" id="4.3.3.7"/>
    </reaction>
</comment>
<comment type="pathway">
    <text evidence="1">Amino-acid biosynthesis; L-lysine biosynthesis via DAP pathway; (S)-tetrahydrodipicolinate from L-aspartate: step 3/4.</text>
</comment>
<comment type="subunit">
    <text evidence="1">Homotetramer; dimer of dimers.</text>
</comment>
<comment type="subcellular location">
    <subcellularLocation>
        <location evidence="1">Cytoplasm</location>
    </subcellularLocation>
</comment>
<comment type="similarity">
    <text evidence="1">Belongs to the DapA family.</text>
</comment>
<comment type="caution">
    <text evidence="2">Was originally thought to be a dihydrodipicolinate synthase (DHDPS), catalyzing the condensation of (S)-aspartate-beta-semialdehyde [(S)-ASA] and pyruvate to dihydrodipicolinate (DHDP). However, it was shown in E.coli that the product of the enzymatic reaction is not dihydrodipicolinate but in fact (4S)-4-hydroxy-2,3,4,5-tetrahydro-(2S)-dipicolinic acid (HTPA), and that the consecutive dehydration reaction leading to DHDP is not spontaneous but catalyzed by DapB.</text>
</comment>
<gene>
    <name evidence="1" type="primary">dapA</name>
    <name type="ordered locus">P9515_18431</name>
</gene>
<proteinExistence type="inferred from homology"/>
<organism>
    <name type="scientific">Prochlorococcus marinus (strain MIT 9515)</name>
    <dbReference type="NCBI Taxonomy" id="167542"/>
    <lineage>
        <taxon>Bacteria</taxon>
        <taxon>Bacillati</taxon>
        <taxon>Cyanobacteriota</taxon>
        <taxon>Cyanophyceae</taxon>
        <taxon>Synechococcales</taxon>
        <taxon>Prochlorococcaceae</taxon>
        <taxon>Prochlorococcus</taxon>
    </lineage>
</organism>
<sequence length="302" mass="32683">MIPNNTQFSNPIFGRILTAMVTPFKENGGVDYELAIKLANHLCENGSDGIVLCGTTGESPTLSWDEQHNLFVAVKSSLNSRSKVIVGTGSNCTSEAIEATKKAYEFGADGALVVVPYYNKPPQEGLYNHFSSIATAASDLPLMLYNIPGRTGCNLLPTTVNKLMNFPNILSIKAASGRIEEVTELRAACGPKLFIYSGDDSLLLPMLSVGAVGVVSVASHIVGLQLKMMIESFQKGEFSIALDIHEKLQPLFKALFETTNPIPIKAALELTGWQVGSPRNPLTPLIKEKKDNLFQIIQNLSL</sequence>
<protein>
    <recommendedName>
        <fullName evidence="1">4-hydroxy-tetrahydrodipicolinate synthase</fullName>
        <shortName evidence="1">HTPA synthase</shortName>
        <ecNumber evidence="1">4.3.3.7</ecNumber>
    </recommendedName>
</protein>
<feature type="chain" id="PRO_1000050242" description="4-hydroxy-tetrahydrodipicolinate synthase">
    <location>
        <begin position="1"/>
        <end position="302"/>
    </location>
</feature>
<feature type="active site" description="Proton donor/acceptor" evidence="1">
    <location>
        <position position="145"/>
    </location>
</feature>
<feature type="active site" description="Schiff-base intermediate with substrate" evidence="1">
    <location>
        <position position="173"/>
    </location>
</feature>
<feature type="binding site" evidence="1">
    <location>
        <position position="56"/>
    </location>
    <ligand>
        <name>pyruvate</name>
        <dbReference type="ChEBI" id="CHEBI:15361"/>
    </ligand>
</feature>
<feature type="binding site" evidence="1">
    <location>
        <position position="215"/>
    </location>
    <ligand>
        <name>pyruvate</name>
        <dbReference type="ChEBI" id="CHEBI:15361"/>
    </ligand>
</feature>
<feature type="site" description="Part of a proton relay during catalysis" evidence="1">
    <location>
        <position position="55"/>
    </location>
</feature>
<feature type="site" description="Part of a proton relay during catalysis" evidence="1">
    <location>
        <position position="118"/>
    </location>
</feature>
<dbReference type="EC" id="4.3.3.7" evidence="1"/>
<dbReference type="EMBL" id="CP000552">
    <property type="protein sequence ID" value="ABM73050.1"/>
    <property type="molecule type" value="Genomic_DNA"/>
</dbReference>
<dbReference type="RefSeq" id="WP_011821135.1">
    <property type="nucleotide sequence ID" value="NC_008817.1"/>
</dbReference>
<dbReference type="SMR" id="A2BZ39"/>
<dbReference type="STRING" id="167542.P9515_18431"/>
<dbReference type="GeneID" id="60201166"/>
<dbReference type="KEGG" id="pmc:P9515_18431"/>
<dbReference type="eggNOG" id="COG0329">
    <property type="taxonomic scope" value="Bacteria"/>
</dbReference>
<dbReference type="HOGENOM" id="CLU_049343_7_1_3"/>
<dbReference type="OrthoDB" id="9782828at2"/>
<dbReference type="UniPathway" id="UPA00034">
    <property type="reaction ID" value="UER00017"/>
</dbReference>
<dbReference type="Proteomes" id="UP000001589">
    <property type="component" value="Chromosome"/>
</dbReference>
<dbReference type="GO" id="GO:0005829">
    <property type="term" value="C:cytosol"/>
    <property type="evidence" value="ECO:0007669"/>
    <property type="project" value="TreeGrafter"/>
</dbReference>
<dbReference type="GO" id="GO:0008840">
    <property type="term" value="F:4-hydroxy-tetrahydrodipicolinate synthase activity"/>
    <property type="evidence" value="ECO:0007669"/>
    <property type="project" value="UniProtKB-UniRule"/>
</dbReference>
<dbReference type="GO" id="GO:0019877">
    <property type="term" value="P:diaminopimelate biosynthetic process"/>
    <property type="evidence" value="ECO:0007669"/>
    <property type="project" value="UniProtKB-UniRule"/>
</dbReference>
<dbReference type="GO" id="GO:0009089">
    <property type="term" value="P:lysine biosynthetic process via diaminopimelate"/>
    <property type="evidence" value="ECO:0007669"/>
    <property type="project" value="UniProtKB-UniRule"/>
</dbReference>
<dbReference type="CDD" id="cd00950">
    <property type="entry name" value="DHDPS"/>
    <property type="match status" value="1"/>
</dbReference>
<dbReference type="Gene3D" id="3.20.20.70">
    <property type="entry name" value="Aldolase class I"/>
    <property type="match status" value="1"/>
</dbReference>
<dbReference type="HAMAP" id="MF_00418">
    <property type="entry name" value="DapA"/>
    <property type="match status" value="1"/>
</dbReference>
<dbReference type="InterPro" id="IPR013785">
    <property type="entry name" value="Aldolase_TIM"/>
</dbReference>
<dbReference type="InterPro" id="IPR005263">
    <property type="entry name" value="DapA"/>
</dbReference>
<dbReference type="InterPro" id="IPR002220">
    <property type="entry name" value="DapA-like"/>
</dbReference>
<dbReference type="InterPro" id="IPR020625">
    <property type="entry name" value="Schiff_base-form_aldolases_AS"/>
</dbReference>
<dbReference type="InterPro" id="IPR020624">
    <property type="entry name" value="Schiff_base-form_aldolases_CS"/>
</dbReference>
<dbReference type="NCBIfam" id="TIGR00674">
    <property type="entry name" value="dapA"/>
    <property type="match status" value="1"/>
</dbReference>
<dbReference type="PANTHER" id="PTHR12128:SF66">
    <property type="entry name" value="4-HYDROXY-2-OXOGLUTARATE ALDOLASE, MITOCHONDRIAL"/>
    <property type="match status" value="1"/>
</dbReference>
<dbReference type="PANTHER" id="PTHR12128">
    <property type="entry name" value="DIHYDRODIPICOLINATE SYNTHASE"/>
    <property type="match status" value="1"/>
</dbReference>
<dbReference type="Pfam" id="PF00701">
    <property type="entry name" value="DHDPS"/>
    <property type="match status" value="1"/>
</dbReference>
<dbReference type="PIRSF" id="PIRSF001365">
    <property type="entry name" value="DHDPS"/>
    <property type="match status" value="1"/>
</dbReference>
<dbReference type="PRINTS" id="PR00146">
    <property type="entry name" value="DHPICSNTHASE"/>
</dbReference>
<dbReference type="SMART" id="SM01130">
    <property type="entry name" value="DHDPS"/>
    <property type="match status" value="1"/>
</dbReference>
<dbReference type="SUPFAM" id="SSF51569">
    <property type="entry name" value="Aldolase"/>
    <property type="match status" value="1"/>
</dbReference>
<dbReference type="PROSITE" id="PS00665">
    <property type="entry name" value="DHDPS_1"/>
    <property type="match status" value="1"/>
</dbReference>
<dbReference type="PROSITE" id="PS00666">
    <property type="entry name" value="DHDPS_2"/>
    <property type="match status" value="1"/>
</dbReference>
<evidence type="ECO:0000255" key="1">
    <source>
        <dbReference type="HAMAP-Rule" id="MF_00418"/>
    </source>
</evidence>
<evidence type="ECO:0000305" key="2"/>